<accession>P23677</accession>
<accession>Q8TAN3</accession>
<feature type="chain" id="PRO_0000066865" description="Inositol-trisphosphate 3-kinase A">
    <location>
        <begin position="1"/>
        <end position="461"/>
    </location>
</feature>
<feature type="region of interest" description="Required for cytoskeleton location" evidence="4">
    <location>
        <begin position="1"/>
        <end position="133"/>
    </location>
</feature>
<feature type="region of interest" description="Disordered" evidence="3">
    <location>
        <begin position="1"/>
        <end position="29"/>
    </location>
</feature>
<feature type="region of interest" description="Disordered" evidence="3">
    <location>
        <begin position="49"/>
        <end position="160"/>
    </location>
</feature>
<feature type="region of interest" description="Calmodulin-binding" evidence="1">
    <location>
        <begin position="287"/>
        <end position="295"/>
    </location>
</feature>
<feature type="compositionally biased region" description="Low complexity" evidence="3">
    <location>
        <begin position="118"/>
        <end position="134"/>
    </location>
</feature>
<feature type="binding site" evidence="5 10">
    <location>
        <position position="197"/>
    </location>
    <ligand>
        <name>ATP</name>
        <dbReference type="ChEBI" id="CHEBI:30616"/>
    </ligand>
</feature>
<feature type="binding site" evidence="5 9">
    <location>
        <position position="209"/>
    </location>
    <ligand>
        <name>ATP</name>
        <dbReference type="ChEBI" id="CHEBI:30616"/>
    </ligand>
</feature>
<feature type="binding site" evidence="5 9">
    <location>
        <begin position="249"/>
        <end position="251"/>
    </location>
    <ligand>
        <name>ATP</name>
        <dbReference type="ChEBI" id="CHEBI:30616"/>
    </ligand>
</feature>
<feature type="binding site" evidence="5 9">
    <location>
        <position position="262"/>
    </location>
    <ligand>
        <name>ATP</name>
        <dbReference type="ChEBI" id="CHEBI:30616"/>
    </ligand>
</feature>
<feature type="binding site" evidence="5 9">
    <location>
        <position position="264"/>
    </location>
    <ligand>
        <name>substrate</name>
    </ligand>
</feature>
<feature type="binding site" evidence="5 9">
    <location>
        <position position="285"/>
    </location>
    <ligand>
        <name>substrate</name>
    </ligand>
</feature>
<feature type="binding site" evidence="5">
    <location>
        <begin position="312"/>
        <end position="319"/>
    </location>
    <ligand>
        <name>substrate</name>
    </ligand>
</feature>
<feature type="binding site" evidence="5 9">
    <location>
        <position position="336"/>
    </location>
    <ligand>
        <name>ATP</name>
        <dbReference type="ChEBI" id="CHEBI:30616"/>
    </ligand>
</feature>
<feature type="binding site" evidence="5 9">
    <location>
        <position position="416"/>
    </location>
    <ligand>
        <name>ATP</name>
        <dbReference type="ChEBI" id="CHEBI:30616"/>
    </ligand>
</feature>
<feature type="binding site" evidence="5 9">
    <location>
        <position position="419"/>
    </location>
    <ligand>
        <name>substrate</name>
    </ligand>
</feature>
<feature type="modified residue" description="Omega-N-methylarginine" evidence="2">
    <location>
        <position position="35"/>
    </location>
</feature>
<feature type="modified residue" description="Omega-N-methylarginine" evidence="2">
    <location>
        <position position="55"/>
    </location>
</feature>
<feature type="modified residue" description="Omega-N-methylarginine" evidence="2">
    <location>
        <position position="62"/>
    </location>
</feature>
<feature type="modified residue" description="Phosphoserine" evidence="2">
    <location>
        <position position="137"/>
    </location>
</feature>
<feature type="modified residue" description="Phosphoserine" evidence="11">
    <location>
        <position position="197"/>
    </location>
</feature>
<feature type="mutagenesis site" description="Decreases to 44% of kinase activity." evidence="5">
    <original>W</original>
    <variation>A</variation>
    <location>
        <position position="188"/>
    </location>
</feature>
<feature type="mutagenesis site" description="Decreases to 80% of kinase activity." evidence="5">
    <original>K</original>
    <variation>A</variation>
    <location>
        <position position="199"/>
    </location>
</feature>
<feature type="mutagenesis site" description="Decreases to 12% of kinase activity." evidence="5">
    <original>D</original>
    <variation>A</variation>
    <variation>N</variation>
    <location>
        <position position="262"/>
    </location>
</feature>
<feature type="mutagenesis site" description="Loss of kinase activity." evidence="4">
    <original>K</original>
    <variation>A</variation>
    <location>
        <position position="264"/>
    </location>
</feature>
<feature type="mutagenesis site" description="Loss of kinase activity." evidence="5">
    <original>R</original>
    <variation>D</variation>
    <variation>A</variation>
    <location>
        <position position="319"/>
    </location>
</feature>
<feature type="mutagenesis site" description="Loss of kinase activity." evidence="5">
    <original>D</original>
    <variation>A</variation>
    <location>
        <position position="416"/>
    </location>
</feature>
<feature type="sequence conflict" description="In Ref. 3; AAH26331." evidence="7" ref="3">
    <original>P</original>
    <variation>Q</variation>
    <location>
        <position position="71"/>
    </location>
</feature>
<feature type="helix" evidence="12">
    <location>
        <begin position="166"/>
        <end position="174"/>
    </location>
</feature>
<feature type="turn" evidence="12">
    <location>
        <begin position="177"/>
        <end position="179"/>
    </location>
</feature>
<feature type="helix" evidence="15">
    <location>
        <begin position="188"/>
        <end position="191"/>
    </location>
</feature>
<feature type="strand" evidence="13">
    <location>
        <begin position="198"/>
        <end position="200"/>
    </location>
</feature>
<feature type="strand" evidence="13">
    <location>
        <begin position="206"/>
        <end position="210"/>
    </location>
</feature>
<feature type="helix" evidence="13">
    <location>
        <begin position="213"/>
        <end position="222"/>
    </location>
</feature>
<feature type="helix" evidence="13">
    <location>
        <begin position="226"/>
        <end position="230"/>
    </location>
</feature>
<feature type="strand" evidence="13">
    <location>
        <begin position="234"/>
        <end position="242"/>
    </location>
</feature>
<feature type="strand" evidence="13">
    <location>
        <begin position="244"/>
        <end position="249"/>
    </location>
</feature>
<feature type="turn" evidence="13">
    <location>
        <begin position="251"/>
        <end position="254"/>
    </location>
</feature>
<feature type="strand" evidence="16">
    <location>
        <begin position="255"/>
        <end position="257"/>
    </location>
</feature>
<feature type="strand" evidence="13">
    <location>
        <begin position="259"/>
        <end position="265"/>
    </location>
</feature>
<feature type="helix" evidence="13">
    <location>
        <begin position="272"/>
        <end position="280"/>
    </location>
</feature>
<feature type="helix" evidence="13">
    <location>
        <begin position="286"/>
        <end position="295"/>
    </location>
</feature>
<feature type="helix" evidence="13">
    <location>
        <begin position="302"/>
        <end position="307"/>
    </location>
</feature>
<feature type="helix" evidence="13">
    <location>
        <begin position="312"/>
        <end position="322"/>
    </location>
</feature>
<feature type="helix" evidence="13">
    <location>
        <begin position="325"/>
        <end position="328"/>
    </location>
</feature>
<feature type="strand" evidence="13">
    <location>
        <begin position="329"/>
        <end position="336"/>
    </location>
</feature>
<feature type="strand" evidence="14">
    <location>
        <begin position="338"/>
        <end position="340"/>
    </location>
</feature>
<feature type="helix" evidence="13">
    <location>
        <begin position="352"/>
        <end position="363"/>
    </location>
</feature>
<feature type="helix" evidence="13">
    <location>
        <begin position="367"/>
        <end position="386"/>
    </location>
</feature>
<feature type="helix" evidence="13">
    <location>
        <begin position="388"/>
        <end position="391"/>
    </location>
</feature>
<feature type="strand" evidence="13">
    <location>
        <begin position="393"/>
        <end position="397"/>
    </location>
</feature>
<feature type="strand" evidence="13">
    <location>
        <begin position="399"/>
        <end position="404"/>
    </location>
</feature>
<feature type="strand" evidence="13">
    <location>
        <begin position="410"/>
        <end position="415"/>
    </location>
</feature>
<feature type="strand" evidence="13">
    <location>
        <begin position="419"/>
        <end position="422"/>
    </location>
</feature>
<feature type="strand" evidence="13">
    <location>
        <begin position="431"/>
        <end position="433"/>
    </location>
</feature>
<feature type="helix" evidence="13">
    <location>
        <begin position="444"/>
        <end position="459"/>
    </location>
</feature>
<sequence length="461" mass="51009">MTLPGGPTGMARPGGARPCSPGLERAPRRSVGELRLLFEARCAAVAAAAAAGEPRARGAKRRGGQVPNGLPRAPPAPVIPQLTVTAEEPDVPPTSPGPPERERDCLPAAGSSHLQQPRRLSTSSVSSTGSSSLLEDSEDDLLSDSESRSRGNVQLEAGEDVGQKNHWQKIRTMVNLPVISPFKKRYAWVQLAGHTGSFKAAGTSGLILKRCSEPERYCLARLMADALRGCVPAFHGVVERDGESYLQLQDLLDGFDGPCVLDCKMGVRTYLEEELTKARERPKLRKDMYKKMLAVDPEAPTEEEHAQRAVTKPRYMQWREGISSSTTLGFRIEGIKKADGSCSTDFKTTRSREQVLRVFEEFVQGDEEVLRRYLNRLQQIRDTLEVSEFFRRHEVIGSSLLFVHDHCHRAGVWLIDFGKTTPLPDGQILDHRRPWEEGNREDGYLLGLDNLIGILASLAER</sequence>
<protein>
    <recommendedName>
        <fullName evidence="7">Inositol-trisphosphate 3-kinase A</fullName>
        <ecNumber evidence="4 5 6">2.7.1.127</ecNumber>
    </recommendedName>
    <alternativeName>
        <fullName>Inositol 1,4,5-trisphosphate 3-kinase A</fullName>
        <shortName>IP3 3-kinase A</shortName>
        <shortName>IP3K A</shortName>
        <shortName>InsP 3-kinase A</shortName>
    </alternativeName>
</protein>
<keyword id="KW-0002">3D-structure</keyword>
<keyword id="KW-0067">ATP-binding</keyword>
<keyword id="KW-0112">Calmodulin-binding</keyword>
<keyword id="KW-0963">Cytoplasm</keyword>
<keyword id="KW-0206">Cytoskeleton</keyword>
<keyword id="KW-0418">Kinase</keyword>
<keyword id="KW-0488">Methylation</keyword>
<keyword id="KW-0547">Nucleotide-binding</keyword>
<keyword id="KW-0597">Phosphoprotein</keyword>
<keyword id="KW-1267">Proteomics identification</keyword>
<keyword id="KW-1185">Reference proteome</keyword>
<keyword id="KW-0808">Transferase</keyword>
<dbReference type="EC" id="2.7.1.127" evidence="4 5 6"/>
<dbReference type="EMBL" id="X54938">
    <property type="protein sequence ID" value="CAA38700.1"/>
    <property type="molecule type" value="mRNA"/>
</dbReference>
<dbReference type="EMBL" id="BC026331">
    <property type="protein sequence ID" value="AAH26331.1"/>
    <property type="molecule type" value="mRNA"/>
</dbReference>
<dbReference type="CCDS" id="CCDS10076.1"/>
<dbReference type="PIR" id="JN0129">
    <property type="entry name" value="JN0129"/>
</dbReference>
<dbReference type="RefSeq" id="NP_002211.1">
    <property type="nucleotide sequence ID" value="NM_002220.3"/>
</dbReference>
<dbReference type="PDB" id="1W2C">
    <property type="method" value="X-ray"/>
    <property type="resolution" value="1.95 A"/>
    <property type="chains" value="A/B=197-461"/>
</dbReference>
<dbReference type="PDB" id="1W2D">
    <property type="method" value="X-ray"/>
    <property type="resolution" value="1.94 A"/>
    <property type="chains" value="A/B=197-461"/>
</dbReference>
<dbReference type="PDB" id="1W2F">
    <property type="method" value="X-ray"/>
    <property type="resolution" value="1.80 A"/>
    <property type="chains" value="A/B=188-461"/>
</dbReference>
<dbReference type="PDB" id="4UPU">
    <property type="method" value="X-ray"/>
    <property type="resolution" value="2.34 A"/>
    <property type="chains" value="B=158-183"/>
</dbReference>
<dbReference type="PDB" id="8PP8">
    <property type="method" value="X-ray"/>
    <property type="resolution" value="1.59 A"/>
    <property type="chains" value="A/B=188-461"/>
</dbReference>
<dbReference type="PDB" id="8PP9">
    <property type="method" value="X-ray"/>
    <property type="resolution" value="1.73 A"/>
    <property type="chains" value="A/B=188-461"/>
</dbReference>
<dbReference type="PDB" id="8PPA">
    <property type="method" value="X-ray"/>
    <property type="resolution" value="1.73 A"/>
    <property type="chains" value="A/B=188-461"/>
</dbReference>
<dbReference type="PDB" id="8PPB">
    <property type="method" value="X-ray"/>
    <property type="resolution" value="1.80 A"/>
    <property type="chains" value="A/B=188-461"/>
</dbReference>
<dbReference type="PDB" id="8PPC">
    <property type="method" value="X-ray"/>
    <property type="resolution" value="1.92 A"/>
    <property type="chains" value="A/B=188-461"/>
</dbReference>
<dbReference type="PDB" id="8PPD">
    <property type="method" value="X-ray"/>
    <property type="resolution" value="1.77 A"/>
    <property type="chains" value="A/B=188-461"/>
</dbReference>
<dbReference type="PDB" id="8PPE">
    <property type="method" value="X-ray"/>
    <property type="resolution" value="1.59 A"/>
    <property type="chains" value="A/B=188-461"/>
</dbReference>
<dbReference type="PDB" id="8PPF">
    <property type="method" value="X-ray"/>
    <property type="resolution" value="1.85 A"/>
    <property type="chains" value="A/B=188-461"/>
</dbReference>
<dbReference type="PDB" id="8PPG">
    <property type="method" value="X-ray"/>
    <property type="resolution" value="1.75 A"/>
    <property type="chains" value="A/B=188-461"/>
</dbReference>
<dbReference type="PDB" id="8PPH">
    <property type="method" value="X-ray"/>
    <property type="resolution" value="1.70 A"/>
    <property type="chains" value="A/B=188-461"/>
</dbReference>
<dbReference type="PDB" id="8PPI">
    <property type="method" value="X-ray"/>
    <property type="resolution" value="1.65 A"/>
    <property type="chains" value="A/B=188-461"/>
</dbReference>
<dbReference type="PDB" id="8PPJ">
    <property type="method" value="X-ray"/>
    <property type="resolution" value="1.75 A"/>
    <property type="chains" value="A/B=188-461"/>
</dbReference>
<dbReference type="PDBsum" id="1W2C"/>
<dbReference type="PDBsum" id="1W2D"/>
<dbReference type="PDBsum" id="1W2F"/>
<dbReference type="PDBsum" id="4UPU"/>
<dbReference type="PDBsum" id="8PP8"/>
<dbReference type="PDBsum" id="8PP9"/>
<dbReference type="PDBsum" id="8PPA"/>
<dbReference type="PDBsum" id="8PPB"/>
<dbReference type="PDBsum" id="8PPC"/>
<dbReference type="PDBsum" id="8PPD"/>
<dbReference type="PDBsum" id="8PPE"/>
<dbReference type="PDBsum" id="8PPF"/>
<dbReference type="PDBsum" id="8PPG"/>
<dbReference type="PDBsum" id="8PPH"/>
<dbReference type="PDBsum" id="8PPI"/>
<dbReference type="PDBsum" id="8PPJ"/>
<dbReference type="SMR" id="P23677"/>
<dbReference type="BioGRID" id="109911">
    <property type="interactions" value="7"/>
</dbReference>
<dbReference type="FunCoup" id="P23677">
    <property type="interactions" value="1639"/>
</dbReference>
<dbReference type="IntAct" id="P23677">
    <property type="interactions" value="3"/>
</dbReference>
<dbReference type="STRING" id="9606.ENSP00000260386"/>
<dbReference type="BindingDB" id="P23677"/>
<dbReference type="ChEMBL" id="CHEMBL5164"/>
<dbReference type="DrugBank" id="DB03401">
    <property type="generic name" value="1D-myo-inositol 1,4,5-trisphosphate"/>
</dbReference>
<dbReference type="DrugBank" id="DB01863">
    <property type="generic name" value="Inositol 1,3,4,5-Tetrakisphosphate"/>
</dbReference>
<dbReference type="DrugBank" id="DB04395">
    <property type="generic name" value="Phosphoaminophosphonic Acid-Adenylate Ester"/>
</dbReference>
<dbReference type="GuidetoPHARMACOLOGY" id="1447"/>
<dbReference type="GlyGen" id="P23677">
    <property type="glycosylation" value="1 site"/>
</dbReference>
<dbReference type="iPTMnet" id="P23677"/>
<dbReference type="PhosphoSitePlus" id="P23677"/>
<dbReference type="BioMuta" id="ITPKA"/>
<dbReference type="DMDM" id="124807"/>
<dbReference type="jPOST" id="P23677"/>
<dbReference type="MassIVE" id="P23677"/>
<dbReference type="PaxDb" id="9606-ENSP00000260386"/>
<dbReference type="PeptideAtlas" id="P23677"/>
<dbReference type="ProteomicsDB" id="54145"/>
<dbReference type="Pumba" id="P23677"/>
<dbReference type="Antibodypedia" id="23312">
    <property type="antibodies" value="196 antibodies from 28 providers"/>
</dbReference>
<dbReference type="DNASU" id="3706"/>
<dbReference type="Ensembl" id="ENST00000260386.7">
    <property type="protein sequence ID" value="ENSP00000260386.5"/>
    <property type="gene ID" value="ENSG00000137825.11"/>
</dbReference>
<dbReference type="GeneID" id="3706"/>
<dbReference type="KEGG" id="hsa:3706"/>
<dbReference type="MANE-Select" id="ENST00000260386.7">
    <property type="protein sequence ID" value="ENSP00000260386.5"/>
    <property type="RefSeq nucleotide sequence ID" value="NM_002220.3"/>
    <property type="RefSeq protein sequence ID" value="NP_002211.1"/>
</dbReference>
<dbReference type="UCSC" id="uc001znz.4">
    <property type="organism name" value="human"/>
</dbReference>
<dbReference type="AGR" id="HGNC:6178"/>
<dbReference type="CTD" id="3706"/>
<dbReference type="DisGeNET" id="3706"/>
<dbReference type="GeneCards" id="ITPKA"/>
<dbReference type="HGNC" id="HGNC:6178">
    <property type="gene designation" value="ITPKA"/>
</dbReference>
<dbReference type="HPA" id="ENSG00000137825">
    <property type="expression patterns" value="Tissue enhanced (brain, intestine)"/>
</dbReference>
<dbReference type="MIM" id="147521">
    <property type="type" value="gene"/>
</dbReference>
<dbReference type="neXtProt" id="NX_P23677"/>
<dbReference type="OpenTargets" id="ENSG00000137825"/>
<dbReference type="PharmGKB" id="PA29975"/>
<dbReference type="VEuPathDB" id="HostDB:ENSG00000137825"/>
<dbReference type="eggNOG" id="KOG1621">
    <property type="taxonomic scope" value="Eukaryota"/>
</dbReference>
<dbReference type="GeneTree" id="ENSGT00940000161350"/>
<dbReference type="HOGENOM" id="CLU_017767_1_1_1"/>
<dbReference type="InParanoid" id="P23677"/>
<dbReference type="OMA" id="FQVFVEF"/>
<dbReference type="OrthoDB" id="338650at2759"/>
<dbReference type="PAN-GO" id="P23677">
    <property type="GO annotations" value="5 GO annotations based on evolutionary models"/>
</dbReference>
<dbReference type="PhylomeDB" id="P23677"/>
<dbReference type="TreeFam" id="TF318394"/>
<dbReference type="BioCyc" id="MetaCyc:HS06405-MONOMER"/>
<dbReference type="BRENDA" id="2.7.1.127">
    <property type="organism ID" value="2681"/>
</dbReference>
<dbReference type="PathwayCommons" id="P23677"/>
<dbReference type="Reactome" id="R-HSA-1855204">
    <property type="pathway name" value="Synthesis of IP3 and IP4 in the cytosol"/>
</dbReference>
<dbReference type="SignaLink" id="P23677"/>
<dbReference type="SIGNOR" id="P23677"/>
<dbReference type="BioGRID-ORCS" id="3706">
    <property type="hits" value="25 hits in 1169 CRISPR screens"/>
</dbReference>
<dbReference type="ChiTaRS" id="ITPKA">
    <property type="organism name" value="human"/>
</dbReference>
<dbReference type="EvolutionaryTrace" id="P23677"/>
<dbReference type="GeneWiki" id="ITPKA"/>
<dbReference type="GenomeRNAi" id="3706"/>
<dbReference type="Pharos" id="P23677">
    <property type="development level" value="Tchem"/>
</dbReference>
<dbReference type="PRO" id="PR:P23677"/>
<dbReference type="Proteomes" id="UP000005640">
    <property type="component" value="Chromosome 15"/>
</dbReference>
<dbReference type="RNAct" id="P23677">
    <property type="molecule type" value="protein"/>
</dbReference>
<dbReference type="Bgee" id="ENSG00000137825">
    <property type="expression patterns" value="Expressed in mucosa of transverse colon and 109 other cell types or tissues"/>
</dbReference>
<dbReference type="ExpressionAtlas" id="P23677">
    <property type="expression patterns" value="baseline and differential"/>
</dbReference>
<dbReference type="GO" id="GO:0005737">
    <property type="term" value="C:cytoplasm"/>
    <property type="evidence" value="ECO:0000318"/>
    <property type="project" value="GO_Central"/>
</dbReference>
<dbReference type="GO" id="GO:0005856">
    <property type="term" value="C:cytoskeleton"/>
    <property type="evidence" value="ECO:0000314"/>
    <property type="project" value="UniProtKB"/>
</dbReference>
<dbReference type="GO" id="GO:0005829">
    <property type="term" value="C:cytosol"/>
    <property type="evidence" value="ECO:0000304"/>
    <property type="project" value="Reactome"/>
</dbReference>
<dbReference type="GO" id="GO:0043197">
    <property type="term" value="C:dendritic spine"/>
    <property type="evidence" value="ECO:0007669"/>
    <property type="project" value="Ensembl"/>
</dbReference>
<dbReference type="GO" id="GO:0098978">
    <property type="term" value="C:glutamatergic synapse"/>
    <property type="evidence" value="ECO:0007669"/>
    <property type="project" value="Ensembl"/>
</dbReference>
<dbReference type="GO" id="GO:0005634">
    <property type="term" value="C:nucleus"/>
    <property type="evidence" value="ECO:0000318"/>
    <property type="project" value="GO_Central"/>
</dbReference>
<dbReference type="GO" id="GO:0098871">
    <property type="term" value="C:postsynaptic actin cytoskeleton"/>
    <property type="evidence" value="ECO:0007669"/>
    <property type="project" value="Ensembl"/>
</dbReference>
<dbReference type="GO" id="GO:0005524">
    <property type="term" value="F:ATP binding"/>
    <property type="evidence" value="ECO:0007669"/>
    <property type="project" value="UniProtKB-KW"/>
</dbReference>
<dbReference type="GO" id="GO:0004683">
    <property type="term" value="F:calcium/calmodulin-dependent protein kinase activity"/>
    <property type="evidence" value="ECO:0007669"/>
    <property type="project" value="Ensembl"/>
</dbReference>
<dbReference type="GO" id="GO:0005516">
    <property type="term" value="F:calmodulin binding"/>
    <property type="evidence" value="ECO:0007669"/>
    <property type="project" value="UniProtKB-KW"/>
</dbReference>
<dbReference type="GO" id="GO:0000828">
    <property type="term" value="F:inositol hexakisphosphate kinase activity"/>
    <property type="evidence" value="ECO:0000318"/>
    <property type="project" value="GO_Central"/>
</dbReference>
<dbReference type="GO" id="GO:0008440">
    <property type="term" value="F:inositol-1,4,5-trisphosphate 3-kinase activity"/>
    <property type="evidence" value="ECO:0000314"/>
    <property type="project" value="UniProtKB"/>
</dbReference>
<dbReference type="GO" id="GO:0031267">
    <property type="term" value="F:small GTPase binding"/>
    <property type="evidence" value="ECO:0007669"/>
    <property type="project" value="Ensembl"/>
</dbReference>
<dbReference type="GO" id="GO:0030036">
    <property type="term" value="P:actin cytoskeleton organization"/>
    <property type="evidence" value="ECO:0007669"/>
    <property type="project" value="Ensembl"/>
</dbReference>
<dbReference type="GO" id="GO:0071277">
    <property type="term" value="P:cellular response to calcium ion"/>
    <property type="evidence" value="ECO:0000314"/>
    <property type="project" value="UniProtKB"/>
</dbReference>
<dbReference type="GO" id="GO:0097062">
    <property type="term" value="P:dendritic spine maintenance"/>
    <property type="evidence" value="ECO:0007669"/>
    <property type="project" value="Ensembl"/>
</dbReference>
<dbReference type="GO" id="GO:0006020">
    <property type="term" value="P:inositol metabolic process"/>
    <property type="evidence" value="ECO:0007669"/>
    <property type="project" value="Ensembl"/>
</dbReference>
<dbReference type="GO" id="GO:0032958">
    <property type="term" value="P:inositol phosphate biosynthetic process"/>
    <property type="evidence" value="ECO:0000318"/>
    <property type="project" value="GO_Central"/>
</dbReference>
<dbReference type="GO" id="GO:0098885">
    <property type="term" value="P:modification of postsynaptic actin cytoskeleton"/>
    <property type="evidence" value="ECO:0007669"/>
    <property type="project" value="Ensembl"/>
</dbReference>
<dbReference type="GO" id="GO:0046854">
    <property type="term" value="P:phosphatidylinositol phosphate biosynthetic process"/>
    <property type="evidence" value="ECO:0000314"/>
    <property type="project" value="UniProtKB"/>
</dbReference>
<dbReference type="GO" id="GO:0061003">
    <property type="term" value="P:positive regulation of dendritic spine morphogenesis"/>
    <property type="evidence" value="ECO:0007669"/>
    <property type="project" value="Ensembl"/>
</dbReference>
<dbReference type="GO" id="GO:0048167">
    <property type="term" value="P:regulation of synaptic plasticity"/>
    <property type="evidence" value="ECO:0007669"/>
    <property type="project" value="Ensembl"/>
</dbReference>
<dbReference type="GO" id="GO:0051592">
    <property type="term" value="P:response to calcium ion"/>
    <property type="evidence" value="ECO:0000314"/>
    <property type="project" value="UniProtKB"/>
</dbReference>
<dbReference type="GO" id="GO:0007165">
    <property type="term" value="P:signal transduction"/>
    <property type="evidence" value="ECO:0000304"/>
    <property type="project" value="ProtInc"/>
</dbReference>
<dbReference type="FunFam" id="3.30.470.160:FF:000001">
    <property type="entry name" value="Kinase"/>
    <property type="match status" value="1"/>
</dbReference>
<dbReference type="Gene3D" id="3.30.470.160">
    <property type="entry name" value="Inositol polyphosphate kinase"/>
    <property type="match status" value="1"/>
</dbReference>
<dbReference type="InterPro" id="IPR005522">
    <property type="entry name" value="IPK"/>
</dbReference>
<dbReference type="InterPro" id="IPR038286">
    <property type="entry name" value="IPK_sf"/>
</dbReference>
<dbReference type="PANTHER" id="PTHR12400">
    <property type="entry name" value="INOSITOL POLYPHOSPHATE KINASE"/>
    <property type="match status" value="1"/>
</dbReference>
<dbReference type="PANTHER" id="PTHR12400:SF55">
    <property type="entry name" value="INOSITOL-TRISPHOSPHATE 3-KINASE A"/>
    <property type="match status" value="1"/>
</dbReference>
<dbReference type="Pfam" id="PF03770">
    <property type="entry name" value="IPK"/>
    <property type="match status" value="1"/>
</dbReference>
<dbReference type="SUPFAM" id="SSF56104">
    <property type="entry name" value="SAICAR synthase-like"/>
    <property type="match status" value="1"/>
</dbReference>
<proteinExistence type="evidence at protein level"/>
<gene>
    <name evidence="8" type="primary">ITPKA</name>
</gene>
<name>IP3KA_HUMAN</name>
<reference key="1">
    <citation type="journal article" date="1991" name="Biochem. Biophys. Res. Commun.">
        <title>Molecular cloning and expression of a human brain inositol 1,4,5-trisphosphate 3-kinase.</title>
        <authorList>
            <person name="Takazawa K."/>
            <person name="Perret J."/>
            <person name="Dumont J.E."/>
            <person name="Erneux C."/>
        </authorList>
    </citation>
    <scope>NUCLEOTIDE SEQUENCE [MRNA]</scope>
    <scope>FUNCTION</scope>
    <scope>CATALYTIC ACTIVITY</scope>
    <scope>TISSUE SPECIFICITY</scope>
    <scope>ACTIVITY REGULATION</scope>
    <source>
        <tissue>Brain</tissue>
    </source>
</reference>
<reference key="2">
    <citation type="journal article" date="1990" name="Nucleic Acids Res.">
        <title>Human brain inositol 1,4,5-trisphosphate 3-kinase cDNA sequence.</title>
        <authorList>
            <person name="Takazawa K."/>
            <person name="Perret J."/>
            <person name="Dumont J.E."/>
            <person name="Erneux C."/>
        </authorList>
    </citation>
    <scope>NUCLEOTIDE SEQUENCE [MRNA]</scope>
    <source>
        <tissue>Brain</tissue>
    </source>
</reference>
<reference key="3">
    <citation type="journal article" date="2004" name="Genome Res.">
        <title>The status, quality, and expansion of the NIH full-length cDNA project: the Mammalian Gene Collection (MGC).</title>
        <authorList>
            <consortium name="The MGC Project Team"/>
        </authorList>
    </citation>
    <scope>NUCLEOTIDE SEQUENCE [LARGE SCALE MRNA]</scope>
    <source>
        <tissue>Brain</tissue>
    </source>
</reference>
<reference key="4">
    <citation type="journal article" date="2003" name="Biochem. J.">
        <title>The three isoenzymes of human inositol-1,4,5-trisphosphate 3-kinase show specific intracellular localization but comparable Ca2+ responses on transfection in COS-7 cells.</title>
        <authorList>
            <person name="Dewaste V."/>
            <person name="Moreau C."/>
            <person name="De Smedt F."/>
            <person name="Bex F."/>
            <person name="De Smedt H."/>
            <person name="Wuytack F."/>
            <person name="Missiaen L."/>
            <person name="Erneux C."/>
        </authorList>
    </citation>
    <scope>SUBCELLULAR LOCATION</scope>
    <scope>ACTIVITY REGULATION</scope>
    <scope>FUNCTION</scope>
    <scope>MUTAGENESIS OF LYS-264 AND LYS-486</scope>
    <scope>CATALYTIC ACTIVITY</scope>
</reference>
<reference key="5">
    <citation type="journal article" date="2013" name="J. Proteome Res.">
        <title>Toward a comprehensive characterization of a human cancer cell phosphoproteome.</title>
        <authorList>
            <person name="Zhou H."/>
            <person name="Di Palma S."/>
            <person name="Preisinger C."/>
            <person name="Peng M."/>
            <person name="Polat A.N."/>
            <person name="Heck A.J."/>
            <person name="Mohammed S."/>
        </authorList>
    </citation>
    <scope>PHOSPHORYLATION [LARGE SCALE ANALYSIS] AT SER-197</scope>
    <scope>IDENTIFICATION BY MASS SPECTROMETRY [LARGE SCALE ANALYSIS]</scope>
    <source>
        <tissue>Erythroleukemia</tissue>
    </source>
</reference>
<reference key="6">
    <citation type="journal article" date="2004" name="Mol. Cell">
        <title>Structure of a human inositol 1,4,5-trisphosphate 3-kinase: substrate binding reveals why it is not a phosphoinositide 3-kinase.</title>
        <authorList>
            <person name="Gonzalez B."/>
            <person name="Schell M.J."/>
            <person name="Letcher A.J."/>
            <person name="Veprintsev D.B."/>
            <person name="Irvine R.F."/>
            <person name="Williams R.L."/>
        </authorList>
    </citation>
    <scope>X-RAY CRYSTALLOGRAPHY (1.95 ANGSTROMS) OF 197-461 IN COMPLEX WITH SUBSTRATE AND ADP</scope>
    <scope>BIOPHYSICOCHEMICAL PROPERTIES</scope>
    <scope>FUNCTION</scope>
    <scope>CATALYTIC ACTIVITY</scope>
    <scope>MUTAGENESIS OF TRP-188; LYS-199; ASP-262; ARG-319 AND ASP-416</scope>
</reference>
<comment type="function">
    <text evidence="4 5 6">Catalyzes the phosphorylation of 1D-myo-inositol 1,4,5-trisphosphate (InsP3) into 1D-myo-inositol 1,3,4,5-tetrakisphosphate and participates to the regulation of calcium homeostasis.</text>
</comment>
<comment type="catalytic activity">
    <reaction evidence="4 5 6">
        <text>1D-myo-inositol 1,4,5-trisphosphate + ATP = 1D-myo-inositol 1,3,4,5-tetrakisphosphate + ADP + H(+)</text>
        <dbReference type="Rhea" id="RHEA:11020"/>
        <dbReference type="ChEBI" id="CHEBI:15378"/>
        <dbReference type="ChEBI" id="CHEBI:30616"/>
        <dbReference type="ChEBI" id="CHEBI:57895"/>
        <dbReference type="ChEBI" id="CHEBI:203600"/>
        <dbReference type="ChEBI" id="CHEBI:456216"/>
        <dbReference type="EC" id="2.7.1.127"/>
    </reaction>
    <physiologicalReaction direction="left-to-right" evidence="4 5 6">
        <dbReference type="Rhea" id="RHEA:11021"/>
    </physiologicalReaction>
</comment>
<comment type="activity regulation">
    <text evidence="4 6">Activated by calcium/calmodulin.</text>
</comment>
<comment type="biophysicochemical properties">
    <kinetics>
        <KM evidence="5">1.1 uM for 1D-myo-inositol 1,4,5-trisphosphate</KM>
        <Vmax evidence="5">30.0 umol/min/mg enzyme</Vmax>
    </kinetics>
</comment>
<comment type="subcellular location">
    <subcellularLocation>
        <location evidence="4">Cytoplasm</location>
        <location evidence="4">Cytoskeleton</location>
    </subcellularLocation>
</comment>
<comment type="tissue specificity">
    <text evidence="6">Expressed in brain.</text>
</comment>
<comment type="similarity">
    <text evidence="7">Belongs to the inositol phosphokinase (IPK) family.</text>
</comment>
<evidence type="ECO:0000250" key="1"/>
<evidence type="ECO:0000250" key="2">
    <source>
        <dbReference type="UniProtKB" id="Q8R071"/>
    </source>
</evidence>
<evidence type="ECO:0000256" key="3">
    <source>
        <dbReference type="SAM" id="MobiDB-lite"/>
    </source>
</evidence>
<evidence type="ECO:0000269" key="4">
    <source>
    </source>
</evidence>
<evidence type="ECO:0000269" key="5">
    <source>
    </source>
</evidence>
<evidence type="ECO:0000269" key="6">
    <source>
    </source>
</evidence>
<evidence type="ECO:0000305" key="7"/>
<evidence type="ECO:0000312" key="8">
    <source>
        <dbReference type="HGNC" id="HGNC:6178"/>
    </source>
</evidence>
<evidence type="ECO:0007744" key="9">
    <source>
        <dbReference type="PDB" id="1W2C"/>
    </source>
</evidence>
<evidence type="ECO:0007744" key="10">
    <source>
        <dbReference type="PDB" id="1W2D"/>
    </source>
</evidence>
<evidence type="ECO:0007744" key="11">
    <source>
    </source>
</evidence>
<evidence type="ECO:0007829" key="12">
    <source>
        <dbReference type="PDB" id="4UPU"/>
    </source>
</evidence>
<evidence type="ECO:0007829" key="13">
    <source>
        <dbReference type="PDB" id="8PP8"/>
    </source>
</evidence>
<evidence type="ECO:0007829" key="14">
    <source>
        <dbReference type="PDB" id="8PPA"/>
    </source>
</evidence>
<evidence type="ECO:0007829" key="15">
    <source>
        <dbReference type="PDB" id="8PPD"/>
    </source>
</evidence>
<evidence type="ECO:0007829" key="16">
    <source>
        <dbReference type="PDB" id="8PPG"/>
    </source>
</evidence>
<organism>
    <name type="scientific">Homo sapiens</name>
    <name type="common">Human</name>
    <dbReference type="NCBI Taxonomy" id="9606"/>
    <lineage>
        <taxon>Eukaryota</taxon>
        <taxon>Metazoa</taxon>
        <taxon>Chordata</taxon>
        <taxon>Craniata</taxon>
        <taxon>Vertebrata</taxon>
        <taxon>Euteleostomi</taxon>
        <taxon>Mammalia</taxon>
        <taxon>Eutheria</taxon>
        <taxon>Euarchontoglires</taxon>
        <taxon>Primates</taxon>
        <taxon>Haplorrhini</taxon>
        <taxon>Catarrhini</taxon>
        <taxon>Hominidae</taxon>
        <taxon>Homo</taxon>
    </lineage>
</organism>